<reference key="1">
    <citation type="journal article" date="1998" name="Nature">
        <title>The genome sequence of Rickettsia prowazekii and the origin of mitochondria.</title>
        <authorList>
            <person name="Andersson S.G.E."/>
            <person name="Zomorodipour A."/>
            <person name="Andersson J.O."/>
            <person name="Sicheritz-Ponten T."/>
            <person name="Alsmark U.C.M."/>
            <person name="Podowski R.M."/>
            <person name="Naeslund A.K."/>
            <person name="Eriksson A.-S."/>
            <person name="Winkler H.H."/>
            <person name="Kurland C.G."/>
        </authorList>
    </citation>
    <scope>NUCLEOTIDE SEQUENCE [LARGE SCALE GENOMIC DNA]</scope>
    <source>
        <strain>Madrid E</strain>
    </source>
</reference>
<reference key="2">
    <citation type="journal article" date="2000" name="Science">
        <title>Selfish DNA in protein-coding genes of Rickettsia.</title>
        <authorList>
            <person name="Ogata H."/>
            <person name="Audic S."/>
            <person name="Barbe V."/>
            <person name="Artiguenave F."/>
            <person name="Fournier P.-E."/>
            <person name="Raoult D."/>
            <person name="Claverie J.-M."/>
        </authorList>
    </citation>
    <scope>DOMAIN RPE1</scope>
</reference>
<gene>
    <name type="primary">waaA</name>
    <name type="synonym">kdtA</name>
    <name type="ordered locus">RP089</name>
</gene>
<evidence type="ECO:0000250" key="1"/>
<evidence type="ECO:0000255" key="2"/>
<evidence type="ECO:0000305" key="3"/>
<accession>Q9ZE58</accession>
<protein>
    <recommendedName>
        <fullName>3-deoxy-D-manno-octulosonic acid transferase</fullName>
        <shortName>Kdo transferase</shortName>
        <ecNumber>2.4.99.12</ecNumber>
    </recommendedName>
    <alternativeName>
        <fullName>Lipid IV(A) 3-deoxy-D-manno-octulosonic acid transferase</fullName>
    </alternativeName>
</protein>
<dbReference type="EC" id="2.4.99.12"/>
<dbReference type="EMBL" id="AJ235270">
    <property type="protein sequence ID" value="CAA14559.1"/>
    <property type="molecule type" value="Genomic_DNA"/>
</dbReference>
<dbReference type="PIR" id="H71717">
    <property type="entry name" value="H71717"/>
</dbReference>
<dbReference type="RefSeq" id="NP_220482.1">
    <property type="nucleotide sequence ID" value="NC_000963.1"/>
</dbReference>
<dbReference type="RefSeq" id="WP_004599735.1">
    <property type="nucleotide sequence ID" value="NC_000963.1"/>
</dbReference>
<dbReference type="SMR" id="Q9ZE58"/>
<dbReference type="STRING" id="272947.gene:17555172"/>
<dbReference type="CAZy" id="GT30">
    <property type="family name" value="Glycosyltransferase Family 30"/>
</dbReference>
<dbReference type="EnsemblBacteria" id="CAA14559">
    <property type="protein sequence ID" value="CAA14559"/>
    <property type="gene ID" value="CAA14559"/>
</dbReference>
<dbReference type="GeneID" id="57569216"/>
<dbReference type="KEGG" id="rpr:RP089"/>
<dbReference type="PATRIC" id="fig|272947.5.peg.89"/>
<dbReference type="eggNOG" id="COG1519">
    <property type="taxonomic scope" value="Bacteria"/>
</dbReference>
<dbReference type="HOGENOM" id="CLU_036146_2_0_5"/>
<dbReference type="OrthoDB" id="9789797at2"/>
<dbReference type="UniPathway" id="UPA00958"/>
<dbReference type="Proteomes" id="UP000002480">
    <property type="component" value="Chromosome"/>
</dbReference>
<dbReference type="GO" id="GO:0005886">
    <property type="term" value="C:plasma membrane"/>
    <property type="evidence" value="ECO:0007669"/>
    <property type="project" value="UniProtKB-SubCell"/>
</dbReference>
<dbReference type="GO" id="GO:0043842">
    <property type="term" value="F:Kdo transferase activity"/>
    <property type="evidence" value="ECO:0007669"/>
    <property type="project" value="UniProtKB-EC"/>
</dbReference>
<dbReference type="GO" id="GO:0009245">
    <property type="term" value="P:lipid A biosynthetic process"/>
    <property type="evidence" value="ECO:0007669"/>
    <property type="project" value="TreeGrafter"/>
</dbReference>
<dbReference type="GO" id="GO:0009244">
    <property type="term" value="P:lipopolysaccharide core region biosynthetic process"/>
    <property type="evidence" value="ECO:0007669"/>
    <property type="project" value="UniProtKB-UniPathway"/>
</dbReference>
<dbReference type="Gene3D" id="3.40.50.11720">
    <property type="entry name" value="3-Deoxy-D-manno-octulosonic-acid transferase, N-terminal domain"/>
    <property type="match status" value="1"/>
</dbReference>
<dbReference type="Gene3D" id="3.40.50.2000">
    <property type="entry name" value="Glycogen Phosphorylase B"/>
    <property type="match status" value="1"/>
</dbReference>
<dbReference type="InterPro" id="IPR007507">
    <property type="entry name" value="Glycos_transf_N"/>
</dbReference>
<dbReference type="InterPro" id="IPR038107">
    <property type="entry name" value="Glycos_transf_N_sf"/>
</dbReference>
<dbReference type="InterPro" id="IPR039901">
    <property type="entry name" value="Kdotransferase"/>
</dbReference>
<dbReference type="NCBIfam" id="NF004389">
    <property type="entry name" value="PRK05749.1-5"/>
    <property type="match status" value="1"/>
</dbReference>
<dbReference type="PANTHER" id="PTHR42755:SF1">
    <property type="entry name" value="3-DEOXY-D-MANNO-OCTULOSONIC ACID TRANSFERASE, MITOCHONDRIAL-RELATED"/>
    <property type="match status" value="1"/>
</dbReference>
<dbReference type="PANTHER" id="PTHR42755">
    <property type="entry name" value="3-DEOXY-MANNO-OCTULOSONATE CYTIDYLYLTRANSFERASE"/>
    <property type="match status" value="1"/>
</dbReference>
<dbReference type="Pfam" id="PF04413">
    <property type="entry name" value="Glycos_transf_N"/>
    <property type="match status" value="1"/>
</dbReference>
<comment type="function">
    <text evidence="1">Involved in lipopolysaccharide (LPS) biosynthesis. Catalyzes the transfer of 3-deoxy-D-manno-octulosonate (Kdo) residue(s) from CMP-Kdo to lipid IV(A), the tetraacyldisaccharide-1,4'-bisphosphate precursor of lipid A.</text>
</comment>
<comment type="catalytic activity">
    <reaction>
        <text>lipid IVA (E. coli) + CMP-3-deoxy-beta-D-manno-octulosonate = alpha-Kdo-(2-&gt;6)-lipid IVA (E. coli) + CMP + H(+)</text>
        <dbReference type="Rhea" id="RHEA:28066"/>
        <dbReference type="ChEBI" id="CHEBI:15378"/>
        <dbReference type="ChEBI" id="CHEBI:58603"/>
        <dbReference type="ChEBI" id="CHEBI:60364"/>
        <dbReference type="ChEBI" id="CHEBI:60377"/>
        <dbReference type="ChEBI" id="CHEBI:85987"/>
        <dbReference type="EC" id="2.4.99.12"/>
    </reaction>
</comment>
<comment type="pathway">
    <text>Bacterial outer membrane biogenesis; LPS core biosynthesis.</text>
</comment>
<comment type="subcellular location">
    <subcellularLocation>
        <location evidence="1">Cell inner membrane</location>
        <topology evidence="1">Single-pass membrane protein</topology>
        <orientation evidence="1">Cytoplasmic side</orientation>
    </subcellularLocation>
</comment>
<comment type="similarity">
    <text evidence="3">Belongs to the glycosyltransferase group 1 family. Glycosyltransferase 30 subfamily.</text>
</comment>
<organism>
    <name type="scientific">Rickettsia prowazekii (strain Madrid E)</name>
    <dbReference type="NCBI Taxonomy" id="272947"/>
    <lineage>
        <taxon>Bacteria</taxon>
        <taxon>Pseudomonadati</taxon>
        <taxon>Pseudomonadota</taxon>
        <taxon>Alphaproteobacteria</taxon>
        <taxon>Rickettsiales</taxon>
        <taxon>Rickettsiaceae</taxon>
        <taxon>Rickettsieae</taxon>
        <taxon>Rickettsia</taxon>
        <taxon>typhus group</taxon>
    </lineage>
</organism>
<proteinExistence type="inferred from homology"/>
<sequence>MMLLYYTLSFILLPVYFIIIFIRLLIGKEDIRRIQERFAIGKQRQNSALDFIQMSVNKEGFTDHKTTSYVDMHRNASLMYKLSLERSYAHSLVWIHAASVGEVMTALTLIHNISKLAPNVRFLITSWTNASAKILSTKLPKIATHQFLPIDNVIFTRKFLRNWQPDLGIFIESELWPCTINEGAKYCKLLLINARISNKSFKAWLKRKRFFQLIIKNFSKIIVQSERDLQKFNALGISDAMNLGNIKFANEKLLVNQEKLSKLILHLDNRRVLVFASTHPEDEEVILPIINNLKEQFIDCYIILIPRHPERIKSIINNCKLHHLSATAKSQNDLPVLNNDLYIVDRFGEMGLFFSVATISFIGGSFKQGGHNILEAAYFSNCIIFGPDMSKNTDIAKGILQNNAAIQIKNGKDLLNTLTSLLNANNALKLKTYRENALKFVENNQKKILDEYLQIIKQFLP</sequence>
<feature type="chain" id="PRO_0000080290" description="3-deoxy-D-manno-octulosonic acid transferase">
    <location>
        <begin position="1"/>
        <end position="461"/>
    </location>
</feature>
<feature type="transmembrane region" description="Helical; Signal-anchor" evidence="2">
    <location>
        <begin position="2"/>
        <end position="22"/>
    </location>
</feature>
<feature type="domain" description="RPE1 insert">
    <location>
        <begin position="47"/>
        <end position="88"/>
    </location>
</feature>
<feature type="active site" description="Proton acceptor" evidence="1">
    <location>
        <position position="102"/>
    </location>
</feature>
<feature type="binding site" evidence="1">
    <location>
        <begin position="306"/>
        <end position="307"/>
    </location>
    <ligand>
        <name>CMP</name>
        <dbReference type="ChEBI" id="CHEBI:60377"/>
    </ligand>
</feature>
<feature type="binding site" evidence="1">
    <location>
        <begin position="347"/>
        <end position="349"/>
    </location>
    <ligand>
        <name>CMP</name>
        <dbReference type="ChEBI" id="CHEBI:60377"/>
    </ligand>
</feature>
<feature type="binding site" evidence="1">
    <location>
        <begin position="372"/>
        <end position="375"/>
    </location>
    <ligand>
        <name>CMP</name>
        <dbReference type="ChEBI" id="CHEBI:60377"/>
    </ligand>
</feature>
<feature type="site" description="Transition state stabilizer" evidence="1">
    <location>
        <position position="172"/>
    </location>
</feature>
<feature type="site" description="Transition state stabilizer" evidence="1">
    <location>
        <position position="247"/>
    </location>
</feature>
<keyword id="KW-0997">Cell inner membrane</keyword>
<keyword id="KW-1003">Cell membrane</keyword>
<keyword id="KW-0448">Lipopolysaccharide biosynthesis</keyword>
<keyword id="KW-0472">Membrane</keyword>
<keyword id="KW-1185">Reference proteome</keyword>
<keyword id="KW-0735">Signal-anchor</keyword>
<keyword id="KW-0808">Transferase</keyword>
<keyword id="KW-0812">Transmembrane</keyword>
<keyword id="KW-1133">Transmembrane helix</keyword>
<name>KDTA_RICPR</name>